<feature type="chain" id="PRO_1000025369" description="Co-chaperonin GroES">
    <location>
        <begin position="1"/>
        <end position="97"/>
    </location>
</feature>
<protein>
    <recommendedName>
        <fullName evidence="1">Co-chaperonin GroES</fullName>
    </recommendedName>
    <alternativeName>
        <fullName evidence="1">10 kDa chaperonin</fullName>
    </alternativeName>
    <alternativeName>
        <fullName evidence="1">Chaperonin-10</fullName>
        <shortName evidence="1">Cpn10</shortName>
    </alternativeName>
</protein>
<organism>
    <name type="scientific">Shigella boydii serotype 4 (strain Sb227)</name>
    <dbReference type="NCBI Taxonomy" id="300268"/>
    <lineage>
        <taxon>Bacteria</taxon>
        <taxon>Pseudomonadati</taxon>
        <taxon>Pseudomonadota</taxon>
        <taxon>Gammaproteobacteria</taxon>
        <taxon>Enterobacterales</taxon>
        <taxon>Enterobacteriaceae</taxon>
        <taxon>Shigella</taxon>
    </lineage>
</organism>
<evidence type="ECO:0000255" key="1">
    <source>
        <dbReference type="HAMAP-Rule" id="MF_00580"/>
    </source>
</evidence>
<accession>Q31T77</accession>
<name>CH10_SHIBS</name>
<reference key="1">
    <citation type="journal article" date="2005" name="Nucleic Acids Res.">
        <title>Genome dynamics and diversity of Shigella species, the etiologic agents of bacillary dysentery.</title>
        <authorList>
            <person name="Yang F."/>
            <person name="Yang J."/>
            <person name="Zhang X."/>
            <person name="Chen L."/>
            <person name="Jiang Y."/>
            <person name="Yan Y."/>
            <person name="Tang X."/>
            <person name="Wang J."/>
            <person name="Xiong Z."/>
            <person name="Dong J."/>
            <person name="Xue Y."/>
            <person name="Zhu Y."/>
            <person name="Xu X."/>
            <person name="Sun L."/>
            <person name="Chen S."/>
            <person name="Nie H."/>
            <person name="Peng J."/>
            <person name="Xu J."/>
            <person name="Wang Y."/>
            <person name="Yuan Z."/>
            <person name="Wen Y."/>
            <person name="Yao Z."/>
            <person name="Shen Y."/>
            <person name="Qiang B."/>
            <person name="Hou Y."/>
            <person name="Yu J."/>
            <person name="Jin Q."/>
        </authorList>
    </citation>
    <scope>NUCLEOTIDE SEQUENCE [LARGE SCALE GENOMIC DNA]</scope>
    <source>
        <strain>Sb227</strain>
    </source>
</reference>
<comment type="function">
    <text evidence="1">Together with the chaperonin GroEL, plays an essential role in assisting protein folding. The GroEL-GroES system forms a nano-cage that allows encapsulation of the non-native substrate proteins and provides a physical environment optimized to promote and accelerate protein folding. GroES binds to the apical surface of the GroEL ring, thereby capping the opening of the GroEL channel.</text>
</comment>
<comment type="subunit">
    <text evidence="1">Heptamer of 7 subunits arranged in a ring. Interacts with the chaperonin GroEL.</text>
</comment>
<comment type="subcellular location">
    <subcellularLocation>
        <location evidence="1">Cytoplasm</location>
    </subcellularLocation>
</comment>
<comment type="similarity">
    <text evidence="1">Belongs to the GroES chaperonin family.</text>
</comment>
<dbReference type="EMBL" id="CP000036">
    <property type="protein sequence ID" value="ABB68731.1"/>
    <property type="molecule type" value="Genomic_DNA"/>
</dbReference>
<dbReference type="RefSeq" id="WP_001026276.1">
    <property type="nucleotide sequence ID" value="NC_007613.1"/>
</dbReference>
<dbReference type="SMR" id="Q31T77"/>
<dbReference type="KEGG" id="sbo:SBO_4314"/>
<dbReference type="HOGENOM" id="CLU_132825_1_1_6"/>
<dbReference type="Proteomes" id="UP000007067">
    <property type="component" value="Chromosome"/>
</dbReference>
<dbReference type="GO" id="GO:0005737">
    <property type="term" value="C:cytoplasm"/>
    <property type="evidence" value="ECO:0007669"/>
    <property type="project" value="UniProtKB-SubCell"/>
</dbReference>
<dbReference type="GO" id="GO:0005524">
    <property type="term" value="F:ATP binding"/>
    <property type="evidence" value="ECO:0007669"/>
    <property type="project" value="InterPro"/>
</dbReference>
<dbReference type="GO" id="GO:0046872">
    <property type="term" value="F:metal ion binding"/>
    <property type="evidence" value="ECO:0007669"/>
    <property type="project" value="TreeGrafter"/>
</dbReference>
<dbReference type="GO" id="GO:0044183">
    <property type="term" value="F:protein folding chaperone"/>
    <property type="evidence" value="ECO:0007669"/>
    <property type="project" value="InterPro"/>
</dbReference>
<dbReference type="GO" id="GO:0051087">
    <property type="term" value="F:protein-folding chaperone binding"/>
    <property type="evidence" value="ECO:0007669"/>
    <property type="project" value="TreeGrafter"/>
</dbReference>
<dbReference type="GO" id="GO:0051082">
    <property type="term" value="F:unfolded protein binding"/>
    <property type="evidence" value="ECO:0007669"/>
    <property type="project" value="TreeGrafter"/>
</dbReference>
<dbReference type="GO" id="GO:0051085">
    <property type="term" value="P:chaperone cofactor-dependent protein refolding"/>
    <property type="evidence" value="ECO:0007669"/>
    <property type="project" value="TreeGrafter"/>
</dbReference>
<dbReference type="CDD" id="cd00320">
    <property type="entry name" value="cpn10"/>
    <property type="match status" value="1"/>
</dbReference>
<dbReference type="FunFam" id="2.30.33.40:FF:000001">
    <property type="entry name" value="10 kDa chaperonin"/>
    <property type="match status" value="1"/>
</dbReference>
<dbReference type="Gene3D" id="2.30.33.40">
    <property type="entry name" value="GroES chaperonin"/>
    <property type="match status" value="1"/>
</dbReference>
<dbReference type="HAMAP" id="MF_00580">
    <property type="entry name" value="CH10"/>
    <property type="match status" value="1"/>
</dbReference>
<dbReference type="InterPro" id="IPR020818">
    <property type="entry name" value="Chaperonin_GroES"/>
</dbReference>
<dbReference type="InterPro" id="IPR037124">
    <property type="entry name" value="Chaperonin_GroES_sf"/>
</dbReference>
<dbReference type="InterPro" id="IPR018369">
    <property type="entry name" value="Chaprnonin_Cpn10_CS"/>
</dbReference>
<dbReference type="InterPro" id="IPR011032">
    <property type="entry name" value="GroES-like_sf"/>
</dbReference>
<dbReference type="NCBIfam" id="NF001526">
    <property type="entry name" value="PRK00364.1-1"/>
    <property type="match status" value="1"/>
</dbReference>
<dbReference type="NCBIfam" id="NF001527">
    <property type="entry name" value="PRK00364.1-2"/>
    <property type="match status" value="1"/>
</dbReference>
<dbReference type="NCBIfam" id="NF001531">
    <property type="entry name" value="PRK00364.2-2"/>
    <property type="match status" value="1"/>
</dbReference>
<dbReference type="PANTHER" id="PTHR10772">
    <property type="entry name" value="10 KDA HEAT SHOCK PROTEIN"/>
    <property type="match status" value="1"/>
</dbReference>
<dbReference type="PANTHER" id="PTHR10772:SF58">
    <property type="entry name" value="CO-CHAPERONIN GROES"/>
    <property type="match status" value="1"/>
</dbReference>
<dbReference type="Pfam" id="PF00166">
    <property type="entry name" value="Cpn10"/>
    <property type="match status" value="1"/>
</dbReference>
<dbReference type="PRINTS" id="PR00297">
    <property type="entry name" value="CHAPERONIN10"/>
</dbReference>
<dbReference type="SMART" id="SM00883">
    <property type="entry name" value="Cpn10"/>
    <property type="match status" value="1"/>
</dbReference>
<dbReference type="SUPFAM" id="SSF50129">
    <property type="entry name" value="GroES-like"/>
    <property type="match status" value="1"/>
</dbReference>
<dbReference type="PROSITE" id="PS00681">
    <property type="entry name" value="CHAPERONINS_CPN10"/>
    <property type="match status" value="1"/>
</dbReference>
<sequence>MNIRPLHDRVIVKRKEVETKSAGGIVLTGSAAAKSTRGEVLAVGNGRILENGEVKPLDVKVGDIVIFNDGYGVKSEKIDNEEVLIMSESDILAIVEA</sequence>
<gene>
    <name evidence="1" type="primary">groES</name>
    <name evidence="1" type="synonym">groS</name>
    <name type="ordered locus">SBO_4314</name>
</gene>
<proteinExistence type="inferred from homology"/>
<keyword id="KW-0143">Chaperone</keyword>
<keyword id="KW-0963">Cytoplasm</keyword>